<name>LIR3_CAEEL</name>
<proteinExistence type="evidence at transcript level"/>
<reference evidence="7" key="1">
    <citation type="journal article" date="1998" name="Science">
        <title>Genome sequence of the nematode C. elegans: a platform for investigating biology.</title>
        <authorList>
            <consortium name="The C. elegans sequencing consortium"/>
        </authorList>
    </citation>
    <scope>NUCLEOTIDE SEQUENCE [LARGE SCALE GENOMIC DNA]</scope>
    <source>
        <strain evidence="7">Bristol N2</strain>
    </source>
</reference>
<reference evidence="6" key="2">
    <citation type="journal article" date="2011" name="Proc. Natl. Acad. Sci. U.S.A.">
        <title>Shared gene expression in distinct neurons expressing common selector genes.</title>
        <authorList>
            <person name="Topalidou I."/>
            <person name="Chalfie M."/>
        </authorList>
    </citation>
    <scope>TISSUE SPECIFICITY</scope>
</reference>
<reference evidence="6" key="3">
    <citation type="journal article" date="2017" name="Mol. Cell">
        <title>Identification of an RNA polymerase III regulator linked to disease-associated protein aggregation.</title>
        <authorList>
            <person name="Sin O."/>
            <person name="de Jong T."/>
            <person name="Mata-Cabana A."/>
            <person name="Kudron M."/>
            <person name="Zaini M.A."/>
            <person name="Aprile F.A."/>
            <person name="Seinstra R.I."/>
            <person name="Stroo E."/>
            <person name="Prins R.W."/>
            <person name="Martineau C.N."/>
            <person name="Wang H.H."/>
            <person name="Hogewerf W."/>
            <person name="Steinhof A."/>
            <person name="Wanker E.E."/>
            <person name="Vendruscolo M."/>
            <person name="Calkhoven C.F."/>
            <person name="Reinke V."/>
            <person name="Guryev V."/>
            <person name="Nollen E.A."/>
        </authorList>
    </citation>
    <scope>FUNCTION</scope>
    <scope>SUBCELLULAR LOCATION</scope>
</reference>
<sequence length="284" mass="32495">MDPKFLVVEIDSKERALQLVQVMLENGFARFMLLDDLSRHPTLDRIQREEPRISRDELRETASSPVTFETRHSPYPVHEQKVLFPSFSQVSNSMVTSTGIRQEASSVGVGPIEDDDIVEEEEEEDIRLTSKPCVKRRYDHHAEEQEYRDQLMSLLSGEPEIVPIGVNSNDEPSGSNSDSAAKKAKSVGDYHECQLCGVRVKTPRSGRWNLQMHVIALHCVGRQYKCKQCDYLDYRKSTMRKHTVSQHGSDIPPHNITDNIMKAEWHAAMIKCFPEFAHRTGFLN</sequence>
<comment type="function">
    <text evidence="4">Positively regulates the RNA polymerase III-associated transcription of small non-coding RNAs.</text>
</comment>
<comment type="subcellular location">
    <subcellularLocation>
        <location evidence="4">Nucleus</location>
    </subcellularLocation>
    <text evidence="4">Mislocalizes to the cytosol in the presence of polyglutamine.</text>
</comment>
<comment type="tissue specificity">
    <text evidence="3">Expressed in FLP neurons.</text>
</comment>
<comment type="miscellaneous">
    <text evidence="4">In the presence of polyglutamine, mislocalizes to the cytosol and loses its transcriptional regulation activity, but is able to promote protein aggregation.</text>
</comment>
<gene>
    <name evidence="5 8" type="primary">lir-3</name>
    <name evidence="5" type="synonym">moag-2</name>
    <name evidence="8" type="ORF">F37H8.1</name>
</gene>
<protein>
    <recommendedName>
        <fullName evidence="6">Transcription factor lir-3</fullName>
    </recommendedName>
    <alternativeName>
        <fullName evidence="8">Lin-26-related protein 3</fullName>
    </alternativeName>
    <alternativeName>
        <fullName evidence="5">Modifier of aggregation protein 2</fullName>
    </alternativeName>
</protein>
<evidence type="ECO:0000255" key="1">
    <source>
        <dbReference type="PROSITE-ProRule" id="PRU00042"/>
    </source>
</evidence>
<evidence type="ECO:0000256" key="2">
    <source>
        <dbReference type="SAM" id="MobiDB-lite"/>
    </source>
</evidence>
<evidence type="ECO:0000269" key="3">
    <source>
    </source>
</evidence>
<evidence type="ECO:0000269" key="4">
    <source>
    </source>
</evidence>
<evidence type="ECO:0000303" key="5">
    <source>
    </source>
</evidence>
<evidence type="ECO:0000305" key="6"/>
<evidence type="ECO:0000312" key="7">
    <source>
        <dbReference type="Proteomes" id="UP000001940"/>
    </source>
</evidence>
<evidence type="ECO:0000312" key="8">
    <source>
        <dbReference type="WormBase" id="F37H8.1"/>
    </source>
</evidence>
<keyword id="KW-0238">DNA-binding</keyword>
<keyword id="KW-0479">Metal-binding</keyword>
<keyword id="KW-0539">Nucleus</keyword>
<keyword id="KW-1185">Reference proteome</keyword>
<keyword id="KW-0804">Transcription</keyword>
<keyword id="KW-0805">Transcription regulation</keyword>
<keyword id="KW-0862">Zinc</keyword>
<keyword id="KW-0863">Zinc-finger</keyword>
<organism evidence="7">
    <name type="scientific">Caenorhabditis elegans</name>
    <dbReference type="NCBI Taxonomy" id="6239"/>
    <lineage>
        <taxon>Eukaryota</taxon>
        <taxon>Metazoa</taxon>
        <taxon>Ecdysozoa</taxon>
        <taxon>Nematoda</taxon>
        <taxon>Chromadorea</taxon>
        <taxon>Rhabditida</taxon>
        <taxon>Rhabditina</taxon>
        <taxon>Rhabditomorpha</taxon>
        <taxon>Rhabditoidea</taxon>
        <taxon>Rhabditidae</taxon>
        <taxon>Peloderinae</taxon>
        <taxon>Caenorhabditis</taxon>
    </lineage>
</organism>
<dbReference type="EMBL" id="BX284602">
    <property type="protein sequence ID" value="CAB04346.1"/>
    <property type="molecule type" value="Genomic_DNA"/>
</dbReference>
<dbReference type="PIR" id="T21923">
    <property type="entry name" value="T21923"/>
</dbReference>
<dbReference type="RefSeq" id="NP_496395.1">
    <property type="nucleotide sequence ID" value="NM_063994.7"/>
</dbReference>
<dbReference type="SMR" id="O17862"/>
<dbReference type="FunCoup" id="O17862">
    <property type="interactions" value="858"/>
</dbReference>
<dbReference type="IntAct" id="O17862">
    <property type="interactions" value="8"/>
</dbReference>
<dbReference type="STRING" id="6239.F37H8.1.1"/>
<dbReference type="PaxDb" id="6239-F37H8.1"/>
<dbReference type="EnsemblMetazoa" id="F37H8.1.1">
    <property type="protein sequence ID" value="F37H8.1.1"/>
    <property type="gene ID" value="WBGene00003046"/>
</dbReference>
<dbReference type="GeneID" id="174707"/>
<dbReference type="KEGG" id="cel:CELE_F37H8.1"/>
<dbReference type="UCSC" id="F37H8.1">
    <property type="organism name" value="c. elegans"/>
</dbReference>
<dbReference type="AGR" id="WB:WBGene00003046"/>
<dbReference type="CTD" id="174707"/>
<dbReference type="WormBase" id="F37H8.1">
    <property type="protein sequence ID" value="CE15994"/>
    <property type="gene ID" value="WBGene00003046"/>
    <property type="gene designation" value="lir-3"/>
</dbReference>
<dbReference type="eggNOG" id="ENOG502TGQ5">
    <property type="taxonomic scope" value="Eukaryota"/>
</dbReference>
<dbReference type="GeneTree" id="ENSGT00970000196232"/>
<dbReference type="HOGENOM" id="CLU_980819_0_0_1"/>
<dbReference type="InParanoid" id="O17862"/>
<dbReference type="OMA" id="PKFLVVE"/>
<dbReference type="OrthoDB" id="5800096at2759"/>
<dbReference type="PRO" id="PR:O17862"/>
<dbReference type="Proteomes" id="UP000001940">
    <property type="component" value="Chromosome II"/>
</dbReference>
<dbReference type="Bgee" id="WBGene00003046">
    <property type="expression patterns" value="Expressed in pharyngeal muscle cell (C elegans) and 3 other cell types or tissues"/>
</dbReference>
<dbReference type="GO" id="GO:0005634">
    <property type="term" value="C:nucleus"/>
    <property type="evidence" value="ECO:0007669"/>
    <property type="project" value="UniProtKB-SubCell"/>
</dbReference>
<dbReference type="GO" id="GO:0003677">
    <property type="term" value="F:DNA binding"/>
    <property type="evidence" value="ECO:0007669"/>
    <property type="project" value="UniProtKB-KW"/>
</dbReference>
<dbReference type="GO" id="GO:0008270">
    <property type="term" value="F:zinc ion binding"/>
    <property type="evidence" value="ECO:0007669"/>
    <property type="project" value="UniProtKB-KW"/>
</dbReference>
<dbReference type="Gene3D" id="3.30.160.60">
    <property type="entry name" value="Classic Zinc Finger"/>
    <property type="match status" value="1"/>
</dbReference>
<dbReference type="InterPro" id="IPR013087">
    <property type="entry name" value="Znf_C2H2_type"/>
</dbReference>
<dbReference type="PROSITE" id="PS50157">
    <property type="entry name" value="ZINC_FINGER_C2H2_2"/>
    <property type="match status" value="1"/>
</dbReference>
<feature type="chain" id="PRO_0000440578" description="Transcription factor lir-3" evidence="6">
    <location>
        <begin position="1"/>
        <end position="284"/>
    </location>
</feature>
<feature type="zinc finger region" description="C2H2-type" evidence="1">
    <location>
        <begin position="224"/>
        <end position="247"/>
    </location>
</feature>
<feature type="region of interest" description="Disordered" evidence="2">
    <location>
        <begin position="50"/>
        <end position="71"/>
    </location>
</feature>
<feature type="compositionally biased region" description="Basic and acidic residues" evidence="2">
    <location>
        <begin position="50"/>
        <end position="60"/>
    </location>
</feature>
<accession>O17862</accession>